<sequence>MELIEKHASFGGWQNVYRHYSQSLKCEMNVGVYLPPKAENEKLPVLYWLSGLTCNEQNFITKSGMQRYAAEHNIIVVAPDTSPRGSHVADADRYDLGQGAGFYLNATQAPWNEHYKMYDYIRNELPNLVMHHFPATARKSISGHSMGGLGALVLALRNPDEYASVSAFSPIVSPSQVPWGQQAFAAYLGENKDAWLDYDPVSLISQGQRVAEIMVDQGLSDDFYAEQLRTSNLEKICQEMNIKTLIRYHEGYDHSYYFVSSFIGEHIAYHANKLNMR</sequence>
<feature type="chain" id="PRO_0000341661" description="S-formylglutathione hydrolase FrmB">
    <location>
        <begin position="1"/>
        <end position="277"/>
    </location>
</feature>
<feature type="active site" description="Charge relay system" evidence="1">
    <location>
        <position position="145"/>
    </location>
</feature>
<feature type="active site" description="Charge relay system" evidence="1">
    <location>
        <position position="221"/>
    </location>
</feature>
<feature type="active site" description="Charge relay system" evidence="1">
    <location>
        <position position="254"/>
    </location>
</feature>
<protein>
    <recommendedName>
        <fullName>S-formylglutathione hydrolase FrmB</fullName>
        <shortName>FGH</shortName>
        <ecNumber>3.1.2.12</ecNumber>
    </recommendedName>
</protein>
<proteinExistence type="inferred from homology"/>
<evidence type="ECO:0000250" key="1"/>
<evidence type="ECO:0000305" key="2"/>
<organism>
    <name type="scientific">Escherichia coli O6:H1 (strain CFT073 / ATCC 700928 / UPEC)</name>
    <dbReference type="NCBI Taxonomy" id="199310"/>
    <lineage>
        <taxon>Bacteria</taxon>
        <taxon>Pseudomonadati</taxon>
        <taxon>Pseudomonadota</taxon>
        <taxon>Gammaproteobacteria</taxon>
        <taxon>Enterobacterales</taxon>
        <taxon>Enterobacteriaceae</taxon>
        <taxon>Escherichia</taxon>
    </lineage>
</organism>
<keyword id="KW-0378">Hydrolase</keyword>
<keyword id="KW-1185">Reference proteome</keyword>
<keyword id="KW-0719">Serine esterase</keyword>
<gene>
    <name type="primary">frmB</name>
    <name type="ordered locus">c0464</name>
</gene>
<comment type="function">
    <text evidence="1">Serine hydrolase involved in the detoxification of formaldehyde. Hydrolyzes S-formylglutathione to glutathione and formate (By similarity).</text>
</comment>
<comment type="catalytic activity">
    <reaction>
        <text>S-formylglutathione + H2O = formate + glutathione + H(+)</text>
        <dbReference type="Rhea" id="RHEA:14961"/>
        <dbReference type="ChEBI" id="CHEBI:15377"/>
        <dbReference type="ChEBI" id="CHEBI:15378"/>
        <dbReference type="ChEBI" id="CHEBI:15740"/>
        <dbReference type="ChEBI" id="CHEBI:57688"/>
        <dbReference type="ChEBI" id="CHEBI:57925"/>
        <dbReference type="EC" id="3.1.2.12"/>
    </reaction>
</comment>
<comment type="similarity">
    <text evidence="2">Belongs to the esterase D family.</text>
</comment>
<dbReference type="EC" id="3.1.2.12"/>
<dbReference type="EMBL" id="AE014075">
    <property type="protein sequence ID" value="AAN78942.1"/>
    <property type="molecule type" value="Genomic_DNA"/>
</dbReference>
<dbReference type="SMR" id="Q8FKG2"/>
<dbReference type="STRING" id="199310.c0464"/>
<dbReference type="ESTHER" id="ecoli-yaim">
    <property type="family name" value="A85-EsteraseD-FGH"/>
</dbReference>
<dbReference type="KEGG" id="ecc:c0464"/>
<dbReference type="eggNOG" id="COG0627">
    <property type="taxonomic scope" value="Bacteria"/>
</dbReference>
<dbReference type="HOGENOM" id="CLU_056472_0_0_6"/>
<dbReference type="BioCyc" id="ECOL199310:C0464-MONOMER"/>
<dbReference type="Proteomes" id="UP000001410">
    <property type="component" value="Chromosome"/>
</dbReference>
<dbReference type="GO" id="GO:0005829">
    <property type="term" value="C:cytosol"/>
    <property type="evidence" value="ECO:0007669"/>
    <property type="project" value="TreeGrafter"/>
</dbReference>
<dbReference type="GO" id="GO:0052689">
    <property type="term" value="F:carboxylic ester hydrolase activity"/>
    <property type="evidence" value="ECO:0007669"/>
    <property type="project" value="UniProtKB-KW"/>
</dbReference>
<dbReference type="GO" id="GO:0018738">
    <property type="term" value="F:S-formylglutathione hydrolase activity"/>
    <property type="evidence" value="ECO:0007669"/>
    <property type="project" value="UniProtKB-EC"/>
</dbReference>
<dbReference type="GO" id="GO:0046294">
    <property type="term" value="P:formaldehyde catabolic process"/>
    <property type="evidence" value="ECO:0007669"/>
    <property type="project" value="InterPro"/>
</dbReference>
<dbReference type="FunFam" id="3.40.50.1820:FF:000002">
    <property type="entry name" value="S-formylglutathione hydrolase"/>
    <property type="match status" value="1"/>
</dbReference>
<dbReference type="Gene3D" id="3.40.50.1820">
    <property type="entry name" value="alpha/beta hydrolase"/>
    <property type="match status" value="1"/>
</dbReference>
<dbReference type="InterPro" id="IPR029058">
    <property type="entry name" value="AB_hydrolase_fold"/>
</dbReference>
<dbReference type="InterPro" id="IPR000801">
    <property type="entry name" value="Esterase-like"/>
</dbReference>
<dbReference type="InterPro" id="IPR014186">
    <property type="entry name" value="S-formylglutathione_hydrol"/>
</dbReference>
<dbReference type="NCBIfam" id="TIGR02821">
    <property type="entry name" value="fghA_ester_D"/>
    <property type="match status" value="1"/>
</dbReference>
<dbReference type="PANTHER" id="PTHR10061">
    <property type="entry name" value="S-FORMYLGLUTATHIONE HYDROLASE"/>
    <property type="match status" value="1"/>
</dbReference>
<dbReference type="PANTHER" id="PTHR10061:SF0">
    <property type="entry name" value="S-FORMYLGLUTATHIONE HYDROLASE"/>
    <property type="match status" value="1"/>
</dbReference>
<dbReference type="Pfam" id="PF00756">
    <property type="entry name" value="Esterase"/>
    <property type="match status" value="1"/>
</dbReference>
<dbReference type="SUPFAM" id="SSF53474">
    <property type="entry name" value="alpha/beta-Hydrolases"/>
    <property type="match status" value="1"/>
</dbReference>
<reference key="1">
    <citation type="journal article" date="2002" name="Proc. Natl. Acad. Sci. U.S.A.">
        <title>Extensive mosaic structure revealed by the complete genome sequence of uropathogenic Escherichia coli.</title>
        <authorList>
            <person name="Welch R.A."/>
            <person name="Burland V."/>
            <person name="Plunkett G. III"/>
            <person name="Redford P."/>
            <person name="Roesch P."/>
            <person name="Rasko D."/>
            <person name="Buckles E.L."/>
            <person name="Liou S.-R."/>
            <person name="Boutin A."/>
            <person name="Hackett J."/>
            <person name="Stroud D."/>
            <person name="Mayhew G.F."/>
            <person name="Rose D.J."/>
            <person name="Zhou S."/>
            <person name="Schwartz D.C."/>
            <person name="Perna N.T."/>
            <person name="Mobley H.L.T."/>
            <person name="Donnenberg M.S."/>
            <person name="Blattner F.R."/>
        </authorList>
    </citation>
    <scope>NUCLEOTIDE SEQUENCE [LARGE SCALE GENOMIC DNA]</scope>
    <source>
        <strain>CFT073 / ATCC 700928 / UPEC</strain>
    </source>
</reference>
<name>SFGH1_ECOL6</name>
<accession>Q8FKG2</accession>